<proteinExistence type="evidence at protein level"/>
<sequence length="209" mass="24115">MLVWEELREKALNKIYHDKEIGYLDPDILGFLLAFYRNRNDVYTQSSCSGRITIVDAEMPWDRKNSTIIFKNHLRITEQDLEDVLSKNQVRRLWLIVQGPIIHIYAKNIETGWDILKIAREAGFKHSGILATNQKGVLVELRTGIRMVHLLRESNTERVDKDKIKTLVNVCNEVLARGKQKMNLLKDLLSSSSNNSMELGKNSKLKTPI</sequence>
<organism>
    <name type="scientific">Saccharolobus solfataricus (strain ATCC 35092 / DSM 1617 / JCM 11322 / P2)</name>
    <name type="common">Sulfolobus solfataricus</name>
    <dbReference type="NCBI Taxonomy" id="273057"/>
    <lineage>
        <taxon>Archaea</taxon>
        <taxon>Thermoproteota</taxon>
        <taxon>Thermoprotei</taxon>
        <taxon>Sulfolobales</taxon>
        <taxon>Sulfolobaceae</taxon>
        <taxon>Saccharolobus</taxon>
    </lineage>
</organism>
<dbReference type="EC" id="2.1.1.282" evidence="1"/>
<dbReference type="EMBL" id="Y18930">
    <property type="protein sequence ID" value="CAB57678.1"/>
    <property type="molecule type" value="Genomic_DNA"/>
</dbReference>
<dbReference type="EMBL" id="AE006641">
    <property type="protein sequence ID" value="AAK40933.1"/>
    <property type="molecule type" value="Genomic_DNA"/>
</dbReference>
<dbReference type="PIR" id="F90209">
    <property type="entry name" value="F90209"/>
</dbReference>
<dbReference type="RefSeq" id="WP_009991156.1">
    <property type="nucleotide sequence ID" value="NC_002754.1"/>
</dbReference>
<dbReference type="PDB" id="1TLJ">
    <property type="method" value="X-ray"/>
    <property type="resolution" value="2.80 A"/>
    <property type="chains" value="A/B=1-209"/>
</dbReference>
<dbReference type="PDBsum" id="1TLJ"/>
<dbReference type="SMR" id="Q9UX16"/>
<dbReference type="FunCoup" id="Q9UX16">
    <property type="interactions" value="82"/>
</dbReference>
<dbReference type="STRING" id="273057.SSO0622"/>
<dbReference type="PaxDb" id="273057-SSO0622"/>
<dbReference type="EnsemblBacteria" id="AAK40933">
    <property type="protein sequence ID" value="AAK40933"/>
    <property type="gene ID" value="SSO0622"/>
</dbReference>
<dbReference type="KEGG" id="sso:SSO0622"/>
<dbReference type="eggNOG" id="arCOG04156">
    <property type="taxonomic scope" value="Archaea"/>
</dbReference>
<dbReference type="HOGENOM" id="CLU_047426_2_1_2"/>
<dbReference type="InParanoid" id="Q9UX16"/>
<dbReference type="PhylomeDB" id="Q9UX16"/>
<dbReference type="EvolutionaryTrace" id="Q9UX16"/>
<dbReference type="Proteomes" id="UP000001974">
    <property type="component" value="Chromosome"/>
</dbReference>
<dbReference type="GO" id="GO:0008175">
    <property type="term" value="F:tRNA methyltransferase activity"/>
    <property type="evidence" value="ECO:0007669"/>
    <property type="project" value="InterPro"/>
</dbReference>
<dbReference type="GO" id="GO:0030488">
    <property type="term" value="P:tRNA methylation"/>
    <property type="evidence" value="ECO:0007669"/>
    <property type="project" value="InterPro"/>
</dbReference>
<dbReference type="GO" id="GO:0031591">
    <property type="term" value="P:wybutosine biosynthetic process"/>
    <property type="evidence" value="ECO:0007669"/>
    <property type="project" value="InterPro"/>
</dbReference>
<dbReference type="Gene3D" id="3.30.1960.10">
    <property type="entry name" value="tRNA wybutosine-synthesizing-like"/>
    <property type="match status" value="1"/>
</dbReference>
<dbReference type="HAMAP" id="MF_00266">
    <property type="entry name" value="TYW3_archaea"/>
    <property type="match status" value="1"/>
</dbReference>
<dbReference type="InterPro" id="IPR022908">
    <property type="entry name" value="Taw3"/>
</dbReference>
<dbReference type="InterPro" id="IPR003827">
    <property type="entry name" value="tRNA_yW-synthesising"/>
</dbReference>
<dbReference type="InterPro" id="IPR036602">
    <property type="entry name" value="tRNA_yW-synthesising-like_sf"/>
</dbReference>
<dbReference type="NCBIfam" id="NF003263">
    <property type="entry name" value="PRK04235.1-1"/>
    <property type="match status" value="1"/>
</dbReference>
<dbReference type="PANTHER" id="PTHR48418">
    <property type="entry name" value="TRNA WYBUTOSINE-SYNTHESIZING PROTEIN 3"/>
    <property type="match status" value="1"/>
</dbReference>
<dbReference type="PANTHER" id="PTHR48418:SF1">
    <property type="entry name" value="TRNA WYBUTOSINE-SYNTHESIZING PROTEIN 3"/>
    <property type="match status" value="1"/>
</dbReference>
<dbReference type="Pfam" id="PF02676">
    <property type="entry name" value="TYW3"/>
    <property type="match status" value="1"/>
</dbReference>
<dbReference type="SUPFAM" id="SSF111278">
    <property type="entry name" value="SSo0622-like"/>
    <property type="match status" value="1"/>
</dbReference>
<reference key="1">
    <citation type="journal article" date="2000" name="Genome">
        <title>Gene content and organization of a 281-kbp contig from the genome of the extremely thermophilic archaeon, Sulfolobus solfataricus P2.</title>
        <authorList>
            <person name="Charlebois R.L."/>
            <person name="Singh R.K."/>
            <person name="Chan-Weiher C.C.-Y."/>
            <person name="Allard G."/>
            <person name="Chow C."/>
            <person name="Confalonieri F."/>
            <person name="Curtis B."/>
            <person name="Duguet M."/>
            <person name="Erauso G."/>
            <person name="Faguy D."/>
            <person name="Gaasterland T."/>
            <person name="Garrett R.A."/>
            <person name="Gordon P."/>
            <person name="Jeffries A.C."/>
            <person name="Kozera C."/>
            <person name="Kushwaha N."/>
            <person name="Lafleur E."/>
            <person name="Medina N."/>
            <person name="Peng X."/>
            <person name="Penny S.L."/>
            <person name="She Q."/>
            <person name="St Jean A."/>
            <person name="van der Oost J."/>
            <person name="Young F."/>
            <person name="Zivanovic Y."/>
            <person name="Doolittle W.F."/>
            <person name="Ragan M.A."/>
            <person name="Sensen C.W."/>
        </authorList>
    </citation>
    <scope>NUCLEOTIDE SEQUENCE [LARGE SCALE GENOMIC DNA]</scope>
    <source>
        <strain>ATCC 35092 / DSM 1617 / JCM 11322 / P2</strain>
    </source>
</reference>
<reference key="2">
    <citation type="journal article" date="2001" name="Proc. Natl. Acad. Sci. U.S.A.">
        <title>The complete genome of the crenarchaeon Sulfolobus solfataricus P2.</title>
        <authorList>
            <person name="She Q."/>
            <person name="Singh R.K."/>
            <person name="Confalonieri F."/>
            <person name="Zivanovic Y."/>
            <person name="Allard G."/>
            <person name="Awayez M.J."/>
            <person name="Chan-Weiher C.C.-Y."/>
            <person name="Clausen I.G."/>
            <person name="Curtis B.A."/>
            <person name="De Moors A."/>
            <person name="Erauso G."/>
            <person name="Fletcher C."/>
            <person name="Gordon P.M.K."/>
            <person name="Heikamp-de Jong I."/>
            <person name="Jeffries A.C."/>
            <person name="Kozera C.J."/>
            <person name="Medina N."/>
            <person name="Peng X."/>
            <person name="Thi-Ngoc H.P."/>
            <person name="Redder P."/>
            <person name="Schenk M.E."/>
            <person name="Theriault C."/>
            <person name="Tolstrup N."/>
            <person name="Charlebois R.L."/>
            <person name="Doolittle W.F."/>
            <person name="Duguet M."/>
            <person name="Gaasterland T."/>
            <person name="Garrett R.A."/>
            <person name="Ragan M.A."/>
            <person name="Sensen C.W."/>
            <person name="Van der Oost J."/>
        </authorList>
    </citation>
    <scope>NUCLEOTIDE SEQUENCE [LARGE SCALE GENOMIC DNA]</scope>
    <source>
        <strain>ATCC 35092 / DSM 1617 / JCM 11322 / P2</strain>
    </source>
</reference>
<reference key="3">
    <citation type="submission" date="2004-06" db="PDB data bank">
        <title>Crystal structure of conserved hypothetical protein SSO0622 from Sulfolobus solfataricus.</title>
        <authorList>
            <person name="Jia Z."/>
            <person name="Wong A.H.Y."/>
        </authorList>
    </citation>
    <scope>X-RAY CRYSTALLOGRAPHY (2.80 ANGSTROMS)</scope>
</reference>
<evidence type="ECO:0000255" key="1">
    <source>
        <dbReference type="HAMAP-Rule" id="MF_00266"/>
    </source>
</evidence>
<evidence type="ECO:0007829" key="2">
    <source>
        <dbReference type="PDB" id="1TLJ"/>
    </source>
</evidence>
<comment type="function">
    <text evidence="1">S-adenosyl-L-methionine-dependent methyltransferase that acts as a component of the wyosine derivatives biosynthesis pathway. Probably methylates N-4 position of wybutosine-86 to produce wybutosine-72.</text>
</comment>
<comment type="catalytic activity">
    <reaction evidence="1">
        <text>4-demethyl-7-[(3S)-3-amino-3-carboxypropyl]wyosine(37) in tRNA(Phe) + S-adenosyl-L-methionine = 7-[(3S)-3-amino-3-carboxypropyl]wyosine(37) in tRNA(Phe) + S-adenosyl-L-homocysteine + H(+)</text>
        <dbReference type="Rhea" id="RHEA:36635"/>
        <dbReference type="Rhea" id="RHEA-COMP:10378"/>
        <dbReference type="Rhea" id="RHEA-COMP:10379"/>
        <dbReference type="ChEBI" id="CHEBI:15378"/>
        <dbReference type="ChEBI" id="CHEBI:57856"/>
        <dbReference type="ChEBI" id="CHEBI:59789"/>
        <dbReference type="ChEBI" id="CHEBI:73543"/>
        <dbReference type="ChEBI" id="CHEBI:73550"/>
        <dbReference type="EC" id="2.1.1.282"/>
    </reaction>
</comment>
<comment type="similarity">
    <text evidence="1">Belongs to the TYW3 family.</text>
</comment>
<feature type="chain" id="PRO_0000157102" description="tRNA(Phe) 7-((3-amino-3-carboxypropyl)-4-demethylwyosine(37)-N(4))-methyltransferase">
    <location>
        <begin position="1"/>
        <end position="209"/>
    </location>
</feature>
<feature type="helix" evidence="2">
    <location>
        <begin position="3"/>
        <end position="20"/>
    </location>
</feature>
<feature type="helix" evidence="2">
    <location>
        <begin position="26"/>
        <end position="28"/>
    </location>
</feature>
<feature type="helix" evidence="2">
    <location>
        <begin position="29"/>
        <end position="37"/>
    </location>
</feature>
<feature type="strand" evidence="2">
    <location>
        <begin position="40"/>
        <end position="48"/>
    </location>
</feature>
<feature type="strand" evidence="2">
    <location>
        <begin position="51"/>
        <end position="59"/>
    </location>
</feature>
<feature type="strand" evidence="2">
    <location>
        <begin position="67"/>
        <end position="74"/>
    </location>
</feature>
<feature type="helix" evidence="2">
    <location>
        <begin position="78"/>
        <end position="86"/>
    </location>
</feature>
<feature type="strand" evidence="2">
    <location>
        <begin position="90"/>
        <end position="98"/>
    </location>
</feature>
<feature type="strand" evidence="2">
    <location>
        <begin position="101"/>
        <end position="108"/>
    </location>
</feature>
<feature type="helix" evidence="2">
    <location>
        <begin position="109"/>
        <end position="122"/>
    </location>
</feature>
<feature type="strand" evidence="2">
    <location>
        <begin position="128"/>
        <end position="133"/>
    </location>
</feature>
<feature type="strand" evidence="2">
    <location>
        <begin position="136"/>
        <end position="141"/>
    </location>
</feature>
<feature type="strand" evidence="2">
    <location>
        <begin position="146"/>
        <end position="154"/>
    </location>
</feature>
<feature type="helix" evidence="2">
    <location>
        <begin position="161"/>
        <end position="189"/>
    </location>
</feature>
<accession>Q9UX16</accession>
<gene>
    <name evidence="1" type="primary">taw3</name>
    <name type="ordered locus">SSO0622</name>
    <name type="ORF">C08_028</name>
</gene>
<name>TYW3_SACS2</name>
<protein>
    <recommendedName>
        <fullName evidence="1">tRNA(Phe) 7-((3-amino-3-carboxypropyl)-4-demethylwyosine(37)-N(4))-methyltransferase</fullName>
        <ecNumber evidence="1">2.1.1.282</ecNumber>
    </recommendedName>
    <alternativeName>
        <fullName evidence="1">tRNA wyosine derivatives biosynthesis protein Taw3</fullName>
    </alternativeName>
</protein>
<keyword id="KW-0002">3D-structure</keyword>
<keyword id="KW-0489">Methyltransferase</keyword>
<keyword id="KW-1185">Reference proteome</keyword>
<keyword id="KW-0949">S-adenosyl-L-methionine</keyword>
<keyword id="KW-0808">Transferase</keyword>
<keyword id="KW-0819">tRNA processing</keyword>